<evidence type="ECO:0000250" key="1">
    <source>
        <dbReference type="UniProtKB" id="Q9Y242"/>
    </source>
</evidence>
<evidence type="ECO:0000255" key="2">
    <source>
        <dbReference type="PROSITE-ProRule" id="PRU00086"/>
    </source>
</evidence>
<evidence type="ECO:0000256" key="3">
    <source>
        <dbReference type="SAM" id="MobiDB-lite"/>
    </source>
</evidence>
<evidence type="ECO:0000312" key="4">
    <source>
        <dbReference type="WormBase" id="C01G6.5"/>
    </source>
</evidence>
<feature type="chain" id="PRO_0000065098" description="Germ layers disorganized gldi-3">
    <location>
        <begin position="1"/>
        <end position="952"/>
    </location>
</feature>
<feature type="domain" description="FHA" evidence="2">
    <location>
        <begin position="39"/>
        <end position="100"/>
    </location>
</feature>
<feature type="region of interest" description="Disordered" evidence="3">
    <location>
        <begin position="174"/>
        <end position="220"/>
    </location>
</feature>
<feature type="region of interest" description="Disordered" evidence="3">
    <location>
        <begin position="483"/>
        <end position="639"/>
    </location>
</feature>
<feature type="region of interest" description="Disordered" evidence="3">
    <location>
        <begin position="652"/>
        <end position="866"/>
    </location>
</feature>
<feature type="compositionally biased region" description="Polar residues" evidence="3">
    <location>
        <begin position="179"/>
        <end position="195"/>
    </location>
</feature>
<feature type="compositionally biased region" description="Polar residues" evidence="3">
    <location>
        <begin position="202"/>
        <end position="220"/>
    </location>
</feature>
<feature type="compositionally biased region" description="Acidic residues" evidence="3">
    <location>
        <begin position="523"/>
        <end position="537"/>
    </location>
</feature>
<feature type="compositionally biased region" description="Basic and acidic residues" evidence="3">
    <location>
        <begin position="553"/>
        <end position="568"/>
    </location>
</feature>
<feature type="compositionally biased region" description="Polar residues" evidence="3">
    <location>
        <begin position="569"/>
        <end position="584"/>
    </location>
</feature>
<feature type="compositionally biased region" description="Polar residues" evidence="3">
    <location>
        <begin position="600"/>
        <end position="620"/>
    </location>
</feature>
<feature type="compositionally biased region" description="Low complexity" evidence="3">
    <location>
        <begin position="662"/>
        <end position="679"/>
    </location>
</feature>
<feature type="compositionally biased region" description="Basic and acidic residues" evidence="3">
    <location>
        <begin position="685"/>
        <end position="706"/>
    </location>
</feature>
<feature type="compositionally biased region" description="Low complexity" evidence="3">
    <location>
        <begin position="715"/>
        <end position="724"/>
    </location>
</feature>
<feature type="compositionally biased region" description="Basic and acidic residues" evidence="3">
    <location>
        <begin position="725"/>
        <end position="742"/>
    </location>
</feature>
<feature type="compositionally biased region" description="Basic residues" evidence="3">
    <location>
        <begin position="761"/>
        <end position="772"/>
    </location>
</feature>
<feature type="compositionally biased region" description="Acidic residues" evidence="3">
    <location>
        <begin position="789"/>
        <end position="800"/>
    </location>
</feature>
<feature type="compositionally biased region" description="Basic and acidic residues" evidence="3">
    <location>
        <begin position="823"/>
        <end position="832"/>
    </location>
</feature>
<feature type="compositionally biased region" description="Basic and acidic residues" evidence="3">
    <location>
        <begin position="856"/>
        <end position="866"/>
    </location>
</feature>
<proteinExistence type="inferred from homology"/>
<reference key="1">
    <citation type="journal article" date="1998" name="Science">
        <title>Genome sequence of the nematode C. elegans: a platform for investigating biology.</title>
        <authorList>
            <consortium name="The C. elegans sequencing consortium"/>
        </authorList>
    </citation>
    <scope>NUCLEOTIDE SEQUENCE [LARGE SCALE GENOMIC DNA]</scope>
    <source>
        <strain>Bristol N2</strain>
    </source>
</reference>
<accession>P46012</accession>
<keyword id="KW-0539">Nucleus</keyword>
<keyword id="KW-1185">Reference proteome</keyword>
<keyword id="KW-0804">Transcription</keyword>
<keyword id="KW-0805">Transcription regulation</keyword>
<comment type="function">
    <text evidence="1">Potential transcription factor that may play a role in the regulation of genes involved in cell cycle G1/S transition (By similarity). May bind to regulatory elements of genes (By similarity).</text>
</comment>
<comment type="subcellular location">
    <subcellularLocation>
        <location evidence="1">Nucleus</location>
    </subcellularLocation>
</comment>
<dbReference type="EMBL" id="Z35595">
    <property type="protein sequence ID" value="CAA84636.1"/>
    <property type="molecule type" value="Genomic_DNA"/>
</dbReference>
<dbReference type="PIR" id="T18837">
    <property type="entry name" value="T18837"/>
</dbReference>
<dbReference type="SMR" id="P46012"/>
<dbReference type="BioGRID" id="39794">
    <property type="interactions" value="5"/>
</dbReference>
<dbReference type="FunCoup" id="P46012">
    <property type="interactions" value="1256"/>
</dbReference>
<dbReference type="STRING" id="6239.C01G6.5.1"/>
<dbReference type="iPTMnet" id="P46012"/>
<dbReference type="PaxDb" id="6239-C01G6.5"/>
<dbReference type="PeptideAtlas" id="P46012"/>
<dbReference type="EnsemblMetazoa" id="C01G6.5.1">
    <property type="protein sequence ID" value="C01G6.5.1"/>
    <property type="gene ID" value="WBGene00007227"/>
</dbReference>
<dbReference type="KEGG" id="cel:CELE_C01G6.5"/>
<dbReference type="UCSC" id="C01G6.5">
    <property type="organism name" value="c. elegans"/>
</dbReference>
<dbReference type="AGR" id="WB:WBGene00007227"/>
<dbReference type="CTD" id="174470"/>
<dbReference type="WormBase" id="C01G6.5">
    <property type="protein sequence ID" value="CE00867"/>
    <property type="gene ID" value="WBGene00007227"/>
    <property type="gene designation" value="gldi-3"/>
</dbReference>
<dbReference type="eggNOG" id="ENOG502SBAZ">
    <property type="taxonomic scope" value="Eukaryota"/>
</dbReference>
<dbReference type="GeneTree" id="ENSGT00390000015391"/>
<dbReference type="HOGENOM" id="CLU_304667_0_0_1"/>
<dbReference type="InParanoid" id="P46012"/>
<dbReference type="OMA" id="GHKNGSQ"/>
<dbReference type="OrthoDB" id="5859465at2759"/>
<dbReference type="PRO" id="PR:P46012"/>
<dbReference type="Proteomes" id="UP000001940">
    <property type="component" value="Chromosome II"/>
</dbReference>
<dbReference type="Bgee" id="WBGene00007227">
    <property type="expression patterns" value="Expressed in germ line (C elegans) and 4 other cell types or tissues"/>
</dbReference>
<dbReference type="GO" id="GO:0005634">
    <property type="term" value="C:nucleus"/>
    <property type="evidence" value="ECO:0000318"/>
    <property type="project" value="GO_Central"/>
</dbReference>
<dbReference type="GO" id="GO:0010468">
    <property type="term" value="P:regulation of gene expression"/>
    <property type="evidence" value="ECO:0000318"/>
    <property type="project" value="GO_Central"/>
</dbReference>
<dbReference type="CDD" id="cd22685">
    <property type="entry name" value="FHA_TCF19"/>
    <property type="match status" value="1"/>
</dbReference>
<dbReference type="Gene3D" id="2.60.200.20">
    <property type="match status" value="1"/>
</dbReference>
<dbReference type="Gene3D" id="3.30.40.10">
    <property type="entry name" value="Zinc/RING finger domain, C3HC4 (zinc finger)"/>
    <property type="match status" value="1"/>
</dbReference>
<dbReference type="InterPro" id="IPR000253">
    <property type="entry name" value="FHA_dom"/>
</dbReference>
<dbReference type="InterPro" id="IPR008984">
    <property type="entry name" value="SMAD_FHA_dom_sf"/>
</dbReference>
<dbReference type="InterPro" id="IPR042803">
    <property type="entry name" value="TCF19"/>
</dbReference>
<dbReference type="InterPro" id="IPR013083">
    <property type="entry name" value="Znf_RING/FYVE/PHD"/>
</dbReference>
<dbReference type="PANTHER" id="PTHR15464">
    <property type="entry name" value="TRANSCRIPTION FACTOR 19"/>
    <property type="match status" value="1"/>
</dbReference>
<dbReference type="PANTHER" id="PTHR15464:SF1">
    <property type="entry name" value="TRANSCRIPTION FACTOR 19"/>
    <property type="match status" value="1"/>
</dbReference>
<dbReference type="Pfam" id="PF00498">
    <property type="entry name" value="FHA"/>
    <property type="match status" value="1"/>
</dbReference>
<dbReference type="SMART" id="SM00240">
    <property type="entry name" value="FHA"/>
    <property type="match status" value="1"/>
</dbReference>
<dbReference type="SUPFAM" id="SSF49879">
    <property type="entry name" value="SMAD/FHA domain"/>
    <property type="match status" value="1"/>
</dbReference>
<dbReference type="PROSITE" id="PS50006">
    <property type="entry name" value="FHA_DOMAIN"/>
    <property type="match status" value="1"/>
</dbReference>
<name>YKI5_CAEEL</name>
<sequence>MTTVRLHLRRIMCNSSRAQTAQHTEEERKRTIISLQGGKSFGRATTNDVIFLDGTEHVELEPQFISRCHARVHHTNQDGVEEYLVEDISENGTYINDRRLSKDKREILKSGDTIKFGHKNGSQHVADQKYDHPDADFAFCVEMSTAGEPAYQLVEQIRDSRVKVFAGTACAKDIGPREPSTTNKVLQQEADSTNGGPEMENNRASSASSATPEDTQMPSTSQYFCSIPKKTPFRKEFDSPLHNYIYRTSRHSPLYRKKLAEQAQRMAVKNGTFVNDSGVIELLSHLLDINVAYENLVTKNEKLEIIGTFCEKNKGSFKVDELSRRKEELAVMMEEEEPQTIEIRELLVSLSEKAQDVQSNDFTISASSAFTVISTSGVLCPTASLANESEDSYIQHLKSINISSEKSRKIADELKTVRNSEVAPIENKPLSPEMMVVLHRLVKAKEHNNKVAHVYTGNYASTVSRVMEMVPITSQVAVITTAGTPKHTSKGSAETAPMEVDDERHSASSGSTENNYRRRTDSEESEILDVVGTDEPDKDEKGGTETETPTPSPEDHGRQTQNKIDKNVRMSSTPRIDAQSTPSAVVSALPTPMNSPLPRVTSSKSAQDVSTPSTTPNPVSRSPDPVALVKDSVSSESTVSGIVSLEKIGSPAAQSVASVLPSVSNTTSSTSASLTTSSVAEEEETSSKENTDQKRAVDDSSDESARLVKQIKALSATPSSTPAESSKRKQKDTSSRKMKQLDESSADSDSEDDGRSGDKSTKRRDKARRSTRIGKSTPAKKVGKKEKVVEDEDETDDVQEEEKVTPRGGRRKNMKRTASQSAIKERKTKDKDVEPEEAPKKKRGRKKATPTEEEEPPKTEPSKERCGVAKGHCISAKYEKRKNLQWVSCSICNQWFHVWCVRLDNVCYREDETFLCCGSHPSKEAKDALAGRVYARYQAMPNKKPIPQASEA</sequence>
<organism>
    <name type="scientific">Caenorhabditis elegans</name>
    <dbReference type="NCBI Taxonomy" id="6239"/>
    <lineage>
        <taxon>Eukaryota</taxon>
        <taxon>Metazoa</taxon>
        <taxon>Ecdysozoa</taxon>
        <taxon>Nematoda</taxon>
        <taxon>Chromadorea</taxon>
        <taxon>Rhabditida</taxon>
        <taxon>Rhabditina</taxon>
        <taxon>Rhabditomorpha</taxon>
        <taxon>Rhabditoidea</taxon>
        <taxon>Rhabditidae</taxon>
        <taxon>Peloderinae</taxon>
        <taxon>Caenorhabditis</taxon>
    </lineage>
</organism>
<protein>
    <recommendedName>
        <fullName evidence="4">Germ layers disorganized gldi-3</fullName>
    </recommendedName>
</protein>
<gene>
    <name evidence="4" type="primary">gldi-3</name>
    <name evidence="4" type="ORF">C01G6.5</name>
</gene>